<evidence type="ECO:0000250" key="1"/>
<evidence type="ECO:0000305" key="2"/>
<reference key="1">
    <citation type="journal article" date="2003" name="Nature">
        <title>The genome sequence of the filamentous fungus Neurospora crassa.</title>
        <authorList>
            <person name="Galagan J.E."/>
            <person name="Calvo S.E."/>
            <person name="Borkovich K.A."/>
            <person name="Selker E.U."/>
            <person name="Read N.D."/>
            <person name="Jaffe D.B."/>
            <person name="FitzHugh W."/>
            <person name="Ma L.-J."/>
            <person name="Smirnov S."/>
            <person name="Purcell S."/>
            <person name="Rehman B."/>
            <person name="Elkins T."/>
            <person name="Engels R."/>
            <person name="Wang S."/>
            <person name="Nielsen C.B."/>
            <person name="Butler J."/>
            <person name="Endrizzi M."/>
            <person name="Qui D."/>
            <person name="Ianakiev P."/>
            <person name="Bell-Pedersen D."/>
            <person name="Nelson M.A."/>
            <person name="Werner-Washburne M."/>
            <person name="Selitrennikoff C.P."/>
            <person name="Kinsey J.A."/>
            <person name="Braun E.L."/>
            <person name="Zelter A."/>
            <person name="Schulte U."/>
            <person name="Kothe G.O."/>
            <person name="Jedd G."/>
            <person name="Mewes H.-W."/>
            <person name="Staben C."/>
            <person name="Marcotte E."/>
            <person name="Greenberg D."/>
            <person name="Roy A."/>
            <person name="Foley K."/>
            <person name="Naylor J."/>
            <person name="Stange-Thomann N."/>
            <person name="Barrett R."/>
            <person name="Gnerre S."/>
            <person name="Kamal M."/>
            <person name="Kamvysselis M."/>
            <person name="Mauceli E.W."/>
            <person name="Bielke C."/>
            <person name="Rudd S."/>
            <person name="Frishman D."/>
            <person name="Krystofova S."/>
            <person name="Rasmussen C."/>
            <person name="Metzenberg R.L."/>
            <person name="Perkins D.D."/>
            <person name="Kroken S."/>
            <person name="Cogoni C."/>
            <person name="Macino G."/>
            <person name="Catcheside D.E.A."/>
            <person name="Li W."/>
            <person name="Pratt R.J."/>
            <person name="Osmani S.A."/>
            <person name="DeSouza C.P.C."/>
            <person name="Glass N.L."/>
            <person name="Orbach M.J."/>
            <person name="Berglund J.A."/>
            <person name="Voelker R."/>
            <person name="Yarden O."/>
            <person name="Plamann M."/>
            <person name="Seiler S."/>
            <person name="Dunlap J.C."/>
            <person name="Radford A."/>
            <person name="Aramayo R."/>
            <person name="Natvig D.O."/>
            <person name="Alex L.A."/>
            <person name="Mannhaupt G."/>
            <person name="Ebbole D.J."/>
            <person name="Freitag M."/>
            <person name="Paulsen I."/>
            <person name="Sachs M.S."/>
            <person name="Lander E.S."/>
            <person name="Nusbaum C."/>
            <person name="Birren B.W."/>
        </authorList>
    </citation>
    <scope>NUCLEOTIDE SEQUENCE [LARGE SCALE GENOMIC DNA]</scope>
    <source>
        <strain>ATCC 24698 / 74-OR23-1A / CBS 708.71 / DSM 1257 / FGSC 987</strain>
    </source>
</reference>
<dbReference type="EMBL" id="CM002236">
    <property type="protein sequence ID" value="EAA36568.1"/>
    <property type="molecule type" value="Genomic_DNA"/>
</dbReference>
<dbReference type="RefSeq" id="XP_965804.1">
    <property type="nucleotide sequence ID" value="XM_960711.2"/>
</dbReference>
<dbReference type="SMR" id="Q7SHY8"/>
<dbReference type="FunCoup" id="Q7SHY8">
    <property type="interactions" value="203"/>
</dbReference>
<dbReference type="STRING" id="367110.Q7SHY8"/>
<dbReference type="PaxDb" id="5141-EFNCRP00000000862"/>
<dbReference type="EnsemblFungi" id="EAA36568">
    <property type="protein sequence ID" value="EAA36568"/>
    <property type="gene ID" value="NCU00664"/>
</dbReference>
<dbReference type="GeneID" id="3881929"/>
<dbReference type="KEGG" id="ncr:NCU00664"/>
<dbReference type="VEuPathDB" id="FungiDB:NCU00664"/>
<dbReference type="HOGENOM" id="CLU_043453_2_0_1"/>
<dbReference type="InParanoid" id="Q7SHY8"/>
<dbReference type="OrthoDB" id="7722975at2759"/>
<dbReference type="Proteomes" id="UP000001805">
    <property type="component" value="Chromosome 1, Linkage Group I"/>
</dbReference>
<dbReference type="GO" id="GO:0071013">
    <property type="term" value="C:catalytic step 2 spliceosome"/>
    <property type="evidence" value="ECO:0000318"/>
    <property type="project" value="GO_Central"/>
</dbReference>
<dbReference type="GO" id="GO:0005737">
    <property type="term" value="C:cytoplasm"/>
    <property type="evidence" value="ECO:0007669"/>
    <property type="project" value="UniProtKB-SubCell"/>
</dbReference>
<dbReference type="GO" id="GO:0071014">
    <property type="term" value="C:post-mRNA release spliceosomal complex"/>
    <property type="evidence" value="ECO:0000318"/>
    <property type="project" value="GO_Central"/>
</dbReference>
<dbReference type="GO" id="GO:0071020">
    <property type="term" value="C:post-spliceosomal complex"/>
    <property type="evidence" value="ECO:0000318"/>
    <property type="project" value="GO_Central"/>
</dbReference>
<dbReference type="GO" id="GO:0000974">
    <property type="term" value="C:Prp19 complex"/>
    <property type="evidence" value="ECO:0000318"/>
    <property type="project" value="GO_Central"/>
</dbReference>
<dbReference type="GO" id="GO:0000350">
    <property type="term" value="P:generation of catalytic spliceosome for second transesterification step"/>
    <property type="evidence" value="ECO:0000318"/>
    <property type="project" value="GO_Central"/>
</dbReference>
<dbReference type="GO" id="GO:0000389">
    <property type="term" value="P:mRNA 3'-splice site recognition"/>
    <property type="evidence" value="ECO:0000318"/>
    <property type="project" value="GO_Central"/>
</dbReference>
<dbReference type="FunFam" id="1.10.287.660:FF:000001">
    <property type="entry name" value="pre-mRNA-splicing factor ISY1 homolog"/>
    <property type="match status" value="1"/>
</dbReference>
<dbReference type="Gene3D" id="1.10.287.660">
    <property type="entry name" value="Helix hairpin bin"/>
    <property type="match status" value="1"/>
</dbReference>
<dbReference type="InterPro" id="IPR029012">
    <property type="entry name" value="Helix_hairpin_bin_sf"/>
</dbReference>
<dbReference type="InterPro" id="IPR009360">
    <property type="entry name" value="Isy1"/>
</dbReference>
<dbReference type="InterPro" id="IPR037200">
    <property type="entry name" value="Isy1_sf"/>
</dbReference>
<dbReference type="PANTHER" id="PTHR13021">
    <property type="entry name" value="PRE-MRNA-SPLICING FACTOR ISY1"/>
    <property type="match status" value="1"/>
</dbReference>
<dbReference type="Pfam" id="PF06246">
    <property type="entry name" value="Isy1"/>
    <property type="match status" value="1"/>
</dbReference>
<dbReference type="SUPFAM" id="SSF140102">
    <property type="entry name" value="ISY1 domain-like"/>
    <property type="match status" value="1"/>
</dbReference>
<keyword id="KW-0963">Cytoplasm</keyword>
<keyword id="KW-0507">mRNA processing</keyword>
<keyword id="KW-0508">mRNA splicing</keyword>
<keyword id="KW-0539">Nucleus</keyword>
<keyword id="KW-1185">Reference proteome</keyword>
<keyword id="KW-0747">Spliceosome</keyword>
<organism>
    <name type="scientific">Neurospora crassa (strain ATCC 24698 / 74-OR23-1A / CBS 708.71 / DSM 1257 / FGSC 987)</name>
    <dbReference type="NCBI Taxonomy" id="367110"/>
    <lineage>
        <taxon>Eukaryota</taxon>
        <taxon>Fungi</taxon>
        <taxon>Dikarya</taxon>
        <taxon>Ascomycota</taxon>
        <taxon>Pezizomycotina</taxon>
        <taxon>Sordariomycetes</taxon>
        <taxon>Sordariomycetidae</taxon>
        <taxon>Sordariales</taxon>
        <taxon>Sordariaceae</taxon>
        <taxon>Neurospora</taxon>
    </lineage>
</organism>
<gene>
    <name type="primary">msp-7</name>
    <name type="synonym">isy1</name>
    <name type="ORF">NCU00664</name>
</gene>
<name>ISY1_NEUCR</name>
<feature type="chain" id="PRO_0000192972" description="Pre-mRNA-splicing factor isy1">
    <location>
        <begin position="1"/>
        <end position="239"/>
    </location>
</feature>
<comment type="function">
    <text evidence="1">Involved in pre-mRNA splicing.</text>
</comment>
<comment type="subunit">
    <text evidence="1">Associated with the spliceosome.</text>
</comment>
<comment type="subcellular location">
    <subcellularLocation>
        <location evidence="1">Cytoplasm</location>
    </subcellularLocation>
    <subcellularLocation>
        <location evidence="1">Nucleus</location>
    </subcellularLocation>
</comment>
<comment type="similarity">
    <text evidence="2">Belongs to the ISY1 family.</text>
</comment>
<proteinExistence type="inferred from homology"/>
<accession>Q7SHY8</accession>
<protein>
    <recommendedName>
        <fullName>Pre-mRNA-splicing factor isy1</fullName>
    </recommendedName>
    <alternativeName>
        <fullName>mRNA-splicing protein 7</fullName>
    </alternativeName>
</protein>
<sequence length="239" mass="27536">MARNSEKAQSMLFRFREAQAADLGIIDAGRTRRPRSITEQDSIPACEKWRGQVLKEISRKVSRIQDPALSDYQIRDLNDEINKLMREKHMWEVQIRNLGGPNYMRSGGKVYDEAGREIPGGGRGYKYFGRARELPGVKELFEAAARAKQDDEKPLETRDDLRKQVDAAYYGYAPDEEDEKLLAYEAARERQAFENLAKAAAGLEPPPGWEPLPEWELPTMDEVAQELIDRRRRRLLDQL</sequence>